<evidence type="ECO:0000250" key="1"/>
<evidence type="ECO:0000305" key="2"/>
<reference key="1">
    <citation type="journal article" date="2011" name="PLoS Genet.">
        <title>Whole-genome comparison reveals novel genetic elements that characterize the genome of industrial strains of Saccharomyces cerevisiae.</title>
        <authorList>
            <person name="Borneman A.R."/>
            <person name="Desany B.A."/>
            <person name="Riches D."/>
            <person name="Affourtit J.P."/>
            <person name="Forgan A.H."/>
            <person name="Pretorius I.S."/>
            <person name="Egholm M."/>
            <person name="Chambers P.J."/>
        </authorList>
    </citation>
    <scope>NUCLEOTIDE SEQUENCE [LARGE SCALE GENOMIC DNA]</scope>
    <source>
        <strain>AWRI796</strain>
    </source>
</reference>
<accession>E7KGT3</accession>
<sequence>MSDEIVTNKSVTYVNNTTPVTITSSELDLRSCYQDDEVVIEVHAAALNPIDFITHQLCNSYIFGKYPKTYSRDYSGVIIKAGKDVDNRWKVGDKVNGMYSHIYGERGTLTHYLILNPAKDIPITHMVEVPKDENDPYDDFVYAAAWPLTFGTAFSTLYDFKKDWTSDSKVLVIGASTSVSYAFVHIAKNYFNIGTVVGICSKNSIERNKKLGYDYLVPYDEGSIVENVKKLKQIVLENDKFDMIFDSVGNHDFFPVIDQFLKPKAKNSFYVTIAGNNKANYKNISWRDFVSLSSILKAINPFKKYNWRFGHPYPPNNFIEVGNEMIKKGTYKPPIDSVYEFDQYKEAIDRLMSNRAKGKVVVKMK</sequence>
<name>YIM1_YEASA</name>
<protein>
    <recommendedName>
        <fullName>Protein YIM1</fullName>
    </recommendedName>
</protein>
<gene>
    <name type="primary">YIM1</name>
    <name type="ORF">AWRI796_3739</name>
</gene>
<feature type="chain" id="PRO_0000409685" description="Protein YIM1">
    <location>
        <begin position="1"/>
        <end position="365"/>
    </location>
</feature>
<proteinExistence type="inferred from homology"/>
<dbReference type="EMBL" id="ADVS01000041">
    <property type="protein sequence ID" value="EGA73511.1"/>
    <property type="molecule type" value="Genomic_DNA"/>
</dbReference>
<dbReference type="SMR" id="E7KGT3"/>
<dbReference type="HOGENOM" id="CLU_757741_0_0_1"/>
<dbReference type="OMA" id="GPLTYFT"/>
<dbReference type="OrthoDB" id="3509362at2759"/>
<dbReference type="GO" id="GO:0005811">
    <property type="term" value="C:lipid droplet"/>
    <property type="evidence" value="ECO:0007669"/>
    <property type="project" value="UniProtKB-SubCell"/>
</dbReference>
<dbReference type="GO" id="GO:0005739">
    <property type="term" value="C:mitochondrion"/>
    <property type="evidence" value="ECO:0007669"/>
    <property type="project" value="UniProtKB-SubCell"/>
</dbReference>
<dbReference type="CDD" id="cd08247">
    <property type="entry name" value="AST1_like"/>
    <property type="match status" value="1"/>
</dbReference>
<dbReference type="Gene3D" id="3.90.180.10">
    <property type="entry name" value="Medium-chain alcohol dehydrogenases, catalytic domain"/>
    <property type="match status" value="1"/>
</dbReference>
<dbReference type="Gene3D" id="3.40.50.720">
    <property type="entry name" value="NAD(P)-binding Rossmann-like Domain"/>
    <property type="match status" value="1"/>
</dbReference>
<dbReference type="InterPro" id="IPR013154">
    <property type="entry name" value="ADH-like_N"/>
</dbReference>
<dbReference type="InterPro" id="IPR011032">
    <property type="entry name" value="GroES-like_sf"/>
</dbReference>
<dbReference type="InterPro" id="IPR036291">
    <property type="entry name" value="NAD(P)-bd_dom_sf"/>
</dbReference>
<dbReference type="InterPro" id="IPR050700">
    <property type="entry name" value="YIM1/Zinc_Alcohol_DH_Fams"/>
</dbReference>
<dbReference type="PANTHER" id="PTHR11695">
    <property type="entry name" value="ALCOHOL DEHYDROGENASE RELATED"/>
    <property type="match status" value="1"/>
</dbReference>
<dbReference type="PANTHER" id="PTHR11695:SF294">
    <property type="entry name" value="RETICULON-4-INTERACTING PROTEIN 1, MITOCHONDRIAL"/>
    <property type="match status" value="1"/>
</dbReference>
<dbReference type="Pfam" id="PF08240">
    <property type="entry name" value="ADH_N"/>
    <property type="match status" value="1"/>
</dbReference>
<dbReference type="Pfam" id="PF13602">
    <property type="entry name" value="ADH_zinc_N_2"/>
    <property type="match status" value="1"/>
</dbReference>
<dbReference type="SUPFAM" id="SSF50129">
    <property type="entry name" value="GroES-like"/>
    <property type="match status" value="1"/>
</dbReference>
<dbReference type="SUPFAM" id="SSF51735">
    <property type="entry name" value="NAD(P)-binding Rossmann-fold domains"/>
    <property type="match status" value="1"/>
</dbReference>
<organism>
    <name type="scientific">Saccharomyces cerevisiae (strain AWRI796)</name>
    <name type="common">Baker's yeast</name>
    <dbReference type="NCBI Taxonomy" id="764097"/>
    <lineage>
        <taxon>Eukaryota</taxon>
        <taxon>Fungi</taxon>
        <taxon>Dikarya</taxon>
        <taxon>Ascomycota</taxon>
        <taxon>Saccharomycotina</taxon>
        <taxon>Saccharomycetes</taxon>
        <taxon>Saccharomycetales</taxon>
        <taxon>Saccharomycetaceae</taxon>
        <taxon>Saccharomyces</taxon>
    </lineage>
</organism>
<comment type="subcellular location">
    <subcellularLocation>
        <location evidence="1">Lipid droplet</location>
    </subcellularLocation>
    <subcellularLocation>
        <location evidence="1">Mitochondrion</location>
    </subcellularLocation>
</comment>
<comment type="similarity">
    <text evidence="2">Belongs to the YIM1 family.</text>
</comment>
<keyword id="KW-0551">Lipid droplet</keyword>
<keyword id="KW-0496">Mitochondrion</keyword>